<sequence length="104" mass="11328">MAAKIRREDEVIVLTGKDKGKRGKVTRVLVTGKVVVEGINLVKKHTKPNPQLGITGGIVEKEAAIQVSNVAIFNPATGKADRVGFRFEDGKKVRFFKSNGELVK</sequence>
<gene>
    <name evidence="1" type="primary">rplX</name>
    <name type="ordered locus">Sama_0224</name>
</gene>
<protein>
    <recommendedName>
        <fullName evidence="1">Large ribosomal subunit protein uL24</fullName>
    </recommendedName>
    <alternativeName>
        <fullName evidence="2">50S ribosomal protein L24</fullName>
    </alternativeName>
</protein>
<comment type="function">
    <text evidence="1">One of two assembly initiator proteins, it binds directly to the 5'-end of the 23S rRNA, where it nucleates assembly of the 50S subunit.</text>
</comment>
<comment type="function">
    <text evidence="1">One of the proteins that surrounds the polypeptide exit tunnel on the outside of the subunit.</text>
</comment>
<comment type="subunit">
    <text evidence="1">Part of the 50S ribosomal subunit.</text>
</comment>
<comment type="similarity">
    <text evidence="1">Belongs to the universal ribosomal protein uL24 family.</text>
</comment>
<evidence type="ECO:0000255" key="1">
    <source>
        <dbReference type="HAMAP-Rule" id="MF_01326"/>
    </source>
</evidence>
<evidence type="ECO:0000305" key="2"/>
<keyword id="KW-1185">Reference proteome</keyword>
<keyword id="KW-0687">Ribonucleoprotein</keyword>
<keyword id="KW-0689">Ribosomal protein</keyword>
<keyword id="KW-0694">RNA-binding</keyword>
<keyword id="KW-0699">rRNA-binding</keyword>
<dbReference type="EMBL" id="CP000507">
    <property type="protein sequence ID" value="ABL98435.1"/>
    <property type="molecule type" value="Genomic_DNA"/>
</dbReference>
<dbReference type="RefSeq" id="WP_011758345.1">
    <property type="nucleotide sequence ID" value="NC_008700.1"/>
</dbReference>
<dbReference type="SMR" id="A1S229"/>
<dbReference type="STRING" id="326297.Sama_0224"/>
<dbReference type="KEGG" id="saz:Sama_0224"/>
<dbReference type="eggNOG" id="COG0198">
    <property type="taxonomic scope" value="Bacteria"/>
</dbReference>
<dbReference type="HOGENOM" id="CLU_093315_2_2_6"/>
<dbReference type="OrthoDB" id="9807419at2"/>
<dbReference type="Proteomes" id="UP000009175">
    <property type="component" value="Chromosome"/>
</dbReference>
<dbReference type="GO" id="GO:1990904">
    <property type="term" value="C:ribonucleoprotein complex"/>
    <property type="evidence" value="ECO:0007669"/>
    <property type="project" value="UniProtKB-KW"/>
</dbReference>
<dbReference type="GO" id="GO:0005840">
    <property type="term" value="C:ribosome"/>
    <property type="evidence" value="ECO:0007669"/>
    <property type="project" value="UniProtKB-KW"/>
</dbReference>
<dbReference type="GO" id="GO:0019843">
    <property type="term" value="F:rRNA binding"/>
    <property type="evidence" value="ECO:0007669"/>
    <property type="project" value="UniProtKB-UniRule"/>
</dbReference>
<dbReference type="GO" id="GO:0003735">
    <property type="term" value="F:structural constituent of ribosome"/>
    <property type="evidence" value="ECO:0007669"/>
    <property type="project" value="InterPro"/>
</dbReference>
<dbReference type="GO" id="GO:0006412">
    <property type="term" value="P:translation"/>
    <property type="evidence" value="ECO:0007669"/>
    <property type="project" value="UniProtKB-UniRule"/>
</dbReference>
<dbReference type="CDD" id="cd06089">
    <property type="entry name" value="KOW_RPL26"/>
    <property type="match status" value="1"/>
</dbReference>
<dbReference type="FunFam" id="2.30.30.30:FF:000004">
    <property type="entry name" value="50S ribosomal protein L24"/>
    <property type="match status" value="1"/>
</dbReference>
<dbReference type="Gene3D" id="2.30.30.30">
    <property type="match status" value="1"/>
</dbReference>
<dbReference type="HAMAP" id="MF_01326_B">
    <property type="entry name" value="Ribosomal_uL24_B"/>
    <property type="match status" value="1"/>
</dbReference>
<dbReference type="InterPro" id="IPR014722">
    <property type="entry name" value="Rib_uL2_dom2"/>
</dbReference>
<dbReference type="InterPro" id="IPR003256">
    <property type="entry name" value="Ribosomal_uL24"/>
</dbReference>
<dbReference type="InterPro" id="IPR005825">
    <property type="entry name" value="Ribosomal_uL24_CS"/>
</dbReference>
<dbReference type="InterPro" id="IPR041988">
    <property type="entry name" value="Ribosomal_uL24_KOW"/>
</dbReference>
<dbReference type="InterPro" id="IPR008991">
    <property type="entry name" value="Translation_prot_SH3-like_sf"/>
</dbReference>
<dbReference type="NCBIfam" id="TIGR01079">
    <property type="entry name" value="rplX_bact"/>
    <property type="match status" value="1"/>
</dbReference>
<dbReference type="PANTHER" id="PTHR12903">
    <property type="entry name" value="MITOCHONDRIAL RIBOSOMAL PROTEIN L24"/>
    <property type="match status" value="1"/>
</dbReference>
<dbReference type="Pfam" id="PF17136">
    <property type="entry name" value="ribosomal_L24"/>
    <property type="match status" value="1"/>
</dbReference>
<dbReference type="SUPFAM" id="SSF50104">
    <property type="entry name" value="Translation proteins SH3-like domain"/>
    <property type="match status" value="1"/>
</dbReference>
<dbReference type="PROSITE" id="PS01108">
    <property type="entry name" value="RIBOSOMAL_L24"/>
    <property type="match status" value="1"/>
</dbReference>
<feature type="chain" id="PRO_1000052302" description="Large ribosomal subunit protein uL24">
    <location>
        <begin position="1"/>
        <end position="104"/>
    </location>
</feature>
<reference key="1">
    <citation type="submission" date="2006-12" db="EMBL/GenBank/DDBJ databases">
        <title>Complete sequence of Shewanella amazonensis SB2B.</title>
        <authorList>
            <consortium name="US DOE Joint Genome Institute"/>
            <person name="Copeland A."/>
            <person name="Lucas S."/>
            <person name="Lapidus A."/>
            <person name="Barry K."/>
            <person name="Detter J.C."/>
            <person name="Glavina del Rio T."/>
            <person name="Hammon N."/>
            <person name="Israni S."/>
            <person name="Dalin E."/>
            <person name="Tice H."/>
            <person name="Pitluck S."/>
            <person name="Munk A.C."/>
            <person name="Brettin T."/>
            <person name="Bruce D."/>
            <person name="Han C."/>
            <person name="Tapia R."/>
            <person name="Gilna P."/>
            <person name="Schmutz J."/>
            <person name="Larimer F."/>
            <person name="Land M."/>
            <person name="Hauser L."/>
            <person name="Kyrpides N."/>
            <person name="Mikhailova N."/>
            <person name="Fredrickson J."/>
            <person name="Richardson P."/>
        </authorList>
    </citation>
    <scope>NUCLEOTIDE SEQUENCE [LARGE SCALE GENOMIC DNA]</scope>
    <source>
        <strain>ATCC BAA-1098 / SB2B</strain>
    </source>
</reference>
<name>RL24_SHEAM</name>
<organism>
    <name type="scientific">Shewanella amazonensis (strain ATCC BAA-1098 / SB2B)</name>
    <dbReference type="NCBI Taxonomy" id="326297"/>
    <lineage>
        <taxon>Bacteria</taxon>
        <taxon>Pseudomonadati</taxon>
        <taxon>Pseudomonadota</taxon>
        <taxon>Gammaproteobacteria</taxon>
        <taxon>Alteromonadales</taxon>
        <taxon>Shewanellaceae</taxon>
        <taxon>Shewanella</taxon>
    </lineage>
</organism>
<proteinExistence type="inferred from homology"/>
<accession>A1S229</accession>